<comment type="similarity">
    <text evidence="1">Belongs to the UPF0167 family.</text>
</comment>
<gene>
    <name type="ordered locus">PA1536</name>
</gene>
<proteinExistence type="inferred from homology"/>
<organism>
    <name type="scientific">Pseudomonas aeruginosa (strain ATCC 15692 / DSM 22644 / CIP 104116 / JCM 14847 / LMG 12228 / 1C / PRS 101 / PAO1)</name>
    <dbReference type="NCBI Taxonomy" id="208964"/>
    <lineage>
        <taxon>Bacteria</taxon>
        <taxon>Pseudomonadati</taxon>
        <taxon>Pseudomonadota</taxon>
        <taxon>Gammaproteobacteria</taxon>
        <taxon>Pseudomonadales</taxon>
        <taxon>Pseudomonadaceae</taxon>
        <taxon>Pseudomonas</taxon>
    </lineage>
</organism>
<accession>Q9I3H7</accession>
<feature type="chain" id="PRO_0000209368" description="UPF0167 protein PA1536">
    <location>
        <begin position="1"/>
        <end position="179"/>
    </location>
</feature>
<protein>
    <recommendedName>
        <fullName>UPF0167 protein PA1536</fullName>
    </recommendedName>
</protein>
<dbReference type="EMBL" id="AE004091">
    <property type="protein sequence ID" value="AAG04925.1"/>
    <property type="molecule type" value="Genomic_DNA"/>
</dbReference>
<dbReference type="PIR" id="G83452">
    <property type="entry name" value="G83452"/>
</dbReference>
<dbReference type="RefSeq" id="NP_250227.1">
    <property type="nucleotide sequence ID" value="NC_002516.2"/>
</dbReference>
<dbReference type="RefSeq" id="WP_003103931.1">
    <property type="nucleotide sequence ID" value="NZ_QZGE01000032.1"/>
</dbReference>
<dbReference type="FunCoup" id="Q9I3H7">
    <property type="interactions" value="33"/>
</dbReference>
<dbReference type="STRING" id="208964.PA1536"/>
<dbReference type="PaxDb" id="208964-PA1536"/>
<dbReference type="DNASU" id="883002"/>
<dbReference type="GeneID" id="883002"/>
<dbReference type="KEGG" id="pae:PA1536"/>
<dbReference type="PATRIC" id="fig|208964.12.peg.1589"/>
<dbReference type="PseudoCAP" id="PA1536"/>
<dbReference type="HOGENOM" id="CLU_108448_0_0_6"/>
<dbReference type="InParanoid" id="Q9I3H7"/>
<dbReference type="OrthoDB" id="7065534at2"/>
<dbReference type="PhylomeDB" id="Q9I3H7"/>
<dbReference type="BioCyc" id="PAER208964:G1FZ6-1564-MONOMER"/>
<dbReference type="Proteomes" id="UP000002438">
    <property type="component" value="Chromosome"/>
</dbReference>
<dbReference type="InterPro" id="IPR005363">
    <property type="entry name" value="UPF0167"/>
</dbReference>
<dbReference type="Pfam" id="PF03691">
    <property type="entry name" value="UPF0167"/>
    <property type="match status" value="1"/>
</dbReference>
<evidence type="ECO:0000305" key="1"/>
<name>Y1536_PSEAE</name>
<sequence length="179" mass="19655">MNPPLPHFRYHPEPLASGSIEASATTCQCCGKARGYVYTGSPYSRHELPPGSLCPWCIADGSAAARYEASFSDDYPLLDAGVAADIVTEVCERTPGYTSWQQERWLVCCEDACAFRGDAGREEIGQLGAEGLAQRFADFAWPAITWQRLVDAYTPGGNPAIYRFDCLHCGQAHYDLDFT</sequence>
<reference key="1">
    <citation type="journal article" date="2000" name="Nature">
        <title>Complete genome sequence of Pseudomonas aeruginosa PAO1, an opportunistic pathogen.</title>
        <authorList>
            <person name="Stover C.K."/>
            <person name="Pham X.-Q.T."/>
            <person name="Erwin A.L."/>
            <person name="Mizoguchi S.D."/>
            <person name="Warrener P."/>
            <person name="Hickey M.J."/>
            <person name="Brinkman F.S.L."/>
            <person name="Hufnagle W.O."/>
            <person name="Kowalik D.J."/>
            <person name="Lagrou M."/>
            <person name="Garber R.L."/>
            <person name="Goltry L."/>
            <person name="Tolentino E."/>
            <person name="Westbrock-Wadman S."/>
            <person name="Yuan Y."/>
            <person name="Brody L.L."/>
            <person name="Coulter S.N."/>
            <person name="Folger K.R."/>
            <person name="Kas A."/>
            <person name="Larbig K."/>
            <person name="Lim R.M."/>
            <person name="Smith K.A."/>
            <person name="Spencer D.H."/>
            <person name="Wong G.K.-S."/>
            <person name="Wu Z."/>
            <person name="Paulsen I.T."/>
            <person name="Reizer J."/>
            <person name="Saier M.H. Jr."/>
            <person name="Hancock R.E.W."/>
            <person name="Lory S."/>
            <person name="Olson M.V."/>
        </authorList>
    </citation>
    <scope>NUCLEOTIDE SEQUENCE [LARGE SCALE GENOMIC DNA]</scope>
    <source>
        <strain>ATCC 15692 / DSM 22644 / CIP 104116 / JCM 14847 / LMG 12228 / 1C / PRS 101 / PAO1</strain>
    </source>
</reference>
<keyword id="KW-1185">Reference proteome</keyword>